<accession>Q9Z8A3</accession>
<dbReference type="EMBL" id="AE001363">
    <property type="protein sequence ID" value="AAD18584.1"/>
    <property type="molecule type" value="Genomic_DNA"/>
</dbReference>
<dbReference type="EMBL" id="AE002161">
    <property type="protein sequence ID" value="AAF38169.1"/>
    <property type="molecule type" value="Genomic_DNA"/>
</dbReference>
<dbReference type="EMBL" id="BA000008">
    <property type="protein sequence ID" value="BAA98648.1"/>
    <property type="molecule type" value="Genomic_DNA"/>
</dbReference>
<dbReference type="EMBL" id="AE009440">
    <property type="protein sequence ID" value="AAP98387.1"/>
    <property type="molecule type" value="Genomic_DNA"/>
</dbReference>
<dbReference type="PIR" id="F72077">
    <property type="entry name" value="F72077"/>
</dbReference>
<dbReference type="PIR" id="F86545">
    <property type="entry name" value="F86545"/>
</dbReference>
<dbReference type="RefSeq" id="NP_224640.1">
    <property type="nucleotide sequence ID" value="NC_000922.1"/>
</dbReference>
<dbReference type="RefSeq" id="WP_010883083.1">
    <property type="nucleotide sequence ID" value="NZ_LN847257.1"/>
</dbReference>
<dbReference type="SMR" id="Q9Z8A3"/>
<dbReference type="STRING" id="406984.CPK_ORF00952"/>
<dbReference type="GeneID" id="45050487"/>
<dbReference type="KEGG" id="cpa:CP_0313"/>
<dbReference type="KEGG" id="cpj:CPj0440"/>
<dbReference type="KEGG" id="cpn:CPn_0440"/>
<dbReference type="KEGG" id="cpt:CpB0456"/>
<dbReference type="PATRIC" id="fig|115713.3.peg.487"/>
<dbReference type="HOGENOM" id="CLU_1329976_0_0_0"/>
<dbReference type="OrthoDB" id="18766at2"/>
<dbReference type="Proteomes" id="UP000000583">
    <property type="component" value="Chromosome"/>
</dbReference>
<dbReference type="Proteomes" id="UP000000801">
    <property type="component" value="Chromosome"/>
</dbReference>
<dbReference type="GO" id="GO:0005886">
    <property type="term" value="C:plasma membrane"/>
    <property type="evidence" value="ECO:0007669"/>
    <property type="project" value="UniProtKB-SubCell"/>
</dbReference>
<keyword id="KW-1003">Cell membrane</keyword>
<keyword id="KW-0472">Membrane</keyword>
<keyword id="KW-0812">Transmembrane</keyword>
<keyword id="KW-1133">Transmembrane helix</keyword>
<comment type="subcellular location">
    <subcellularLocation>
        <location evidence="2">Cell membrane</location>
        <topology evidence="2">Multi-pass membrane protein</topology>
    </subcellularLocation>
</comment>
<feature type="chain" id="PRO_0000218378" description="Uncharacterized protein CPn_0440/CP_0313/CPj0440/CpB0456">
    <location>
        <begin position="1"/>
        <end position="212"/>
    </location>
</feature>
<feature type="transmembrane region" description="Helical" evidence="1">
    <location>
        <begin position="54"/>
        <end position="74"/>
    </location>
</feature>
<feature type="transmembrane region" description="Helical" evidence="1">
    <location>
        <begin position="79"/>
        <end position="99"/>
    </location>
</feature>
<protein>
    <recommendedName>
        <fullName>Uncharacterized protein CPn_0440/CP_0313/CPj0440/CpB0456</fullName>
    </recommendedName>
</protein>
<gene>
    <name type="ordered locus">CPn_0440</name>
    <name type="ordered locus">CP_0313</name>
    <name type="ordered locus">CPj0440</name>
    <name type="ordered locus">CpB0456</name>
</gene>
<reference key="1">
    <citation type="journal article" date="1999" name="Nat. Genet.">
        <title>Comparative genomes of Chlamydia pneumoniae and C. trachomatis.</title>
        <authorList>
            <person name="Kalman S."/>
            <person name="Mitchell W.P."/>
            <person name="Marathe R."/>
            <person name="Lammel C.J."/>
            <person name="Fan J."/>
            <person name="Hyman R.W."/>
            <person name="Olinger L."/>
            <person name="Grimwood J."/>
            <person name="Davis R.W."/>
            <person name="Stephens R.S."/>
        </authorList>
    </citation>
    <scope>NUCLEOTIDE SEQUENCE [LARGE SCALE GENOMIC DNA]</scope>
    <source>
        <strain>CWL029</strain>
    </source>
</reference>
<reference key="2">
    <citation type="journal article" date="2000" name="Nucleic Acids Res.">
        <title>Genome sequences of Chlamydia trachomatis MoPn and Chlamydia pneumoniae AR39.</title>
        <authorList>
            <person name="Read T.D."/>
            <person name="Brunham R.C."/>
            <person name="Shen C."/>
            <person name="Gill S.R."/>
            <person name="Heidelberg J.F."/>
            <person name="White O."/>
            <person name="Hickey E.K."/>
            <person name="Peterson J.D."/>
            <person name="Utterback T.R."/>
            <person name="Berry K.J."/>
            <person name="Bass S."/>
            <person name="Linher K.D."/>
            <person name="Weidman J.F."/>
            <person name="Khouri H.M."/>
            <person name="Craven B."/>
            <person name="Bowman C."/>
            <person name="Dodson R.J."/>
            <person name="Gwinn M.L."/>
            <person name="Nelson W.C."/>
            <person name="DeBoy R.T."/>
            <person name="Kolonay J.F."/>
            <person name="McClarty G."/>
            <person name="Salzberg S.L."/>
            <person name="Eisen J.A."/>
            <person name="Fraser C.M."/>
        </authorList>
    </citation>
    <scope>NUCLEOTIDE SEQUENCE [LARGE SCALE GENOMIC DNA]</scope>
    <source>
        <strain>AR39</strain>
    </source>
</reference>
<reference key="3">
    <citation type="journal article" date="2000" name="Nucleic Acids Res.">
        <title>Comparison of whole genome sequences of Chlamydia pneumoniae J138 from Japan and CWL029 from USA.</title>
        <authorList>
            <person name="Shirai M."/>
            <person name="Hirakawa H."/>
            <person name="Kimoto M."/>
            <person name="Tabuchi M."/>
            <person name="Kishi F."/>
            <person name="Ouchi K."/>
            <person name="Shiba T."/>
            <person name="Ishii K."/>
            <person name="Hattori M."/>
            <person name="Kuhara S."/>
            <person name="Nakazawa T."/>
        </authorList>
    </citation>
    <scope>NUCLEOTIDE SEQUENCE [LARGE SCALE GENOMIC DNA]</scope>
    <source>
        <strain>J138</strain>
    </source>
</reference>
<reference key="4">
    <citation type="submission" date="2002-05" db="EMBL/GenBank/DDBJ databases">
        <title>The genome sequence of Chlamydia pneumoniae TW183 and comparison with other Chlamydia strains based on whole genome sequence analysis.</title>
        <authorList>
            <person name="Geng M.M."/>
            <person name="Schuhmacher A."/>
            <person name="Muehldorfer I."/>
            <person name="Bensch K.W."/>
            <person name="Schaefer K.P."/>
            <person name="Schneider S."/>
            <person name="Pohl T."/>
            <person name="Essig A."/>
            <person name="Marre R."/>
            <person name="Melchers K."/>
        </authorList>
    </citation>
    <scope>NUCLEOTIDE SEQUENCE [LARGE SCALE GENOMIC DNA]</scope>
    <source>
        <strain>TW-183</strain>
    </source>
</reference>
<organism>
    <name type="scientific">Chlamydia pneumoniae</name>
    <name type="common">Chlamydophila pneumoniae</name>
    <dbReference type="NCBI Taxonomy" id="83558"/>
    <lineage>
        <taxon>Bacteria</taxon>
        <taxon>Pseudomonadati</taxon>
        <taxon>Chlamydiota</taxon>
        <taxon>Chlamydiia</taxon>
        <taxon>Chlamydiales</taxon>
        <taxon>Chlamydiaceae</taxon>
        <taxon>Chlamydia/Chlamydophila group</taxon>
        <taxon>Chlamydia</taxon>
    </lineage>
</organism>
<name>Y440_CHLPN</name>
<sequence>MATSVAPSPVPESSPLSHATEVLNLPNAYITQPHPIPAAPWETFRSKLSTKHTLCFALTLLLTLGGTISAGYAGYTGNWIICGIGLGIIVLTLILALLLAIPLKNKQTGTKLIDEISQDISSIGSGFVQRYGLMFSTIKSVHLPELTTQNQEKTRILNEIEAKKESIQNLELKITECQNKLAQKQPKRKSSQKSFMRSIKHLSKNPVILFDC</sequence>
<evidence type="ECO:0000255" key="1"/>
<evidence type="ECO:0000305" key="2"/>
<proteinExistence type="predicted"/>